<dbReference type="EMBL" id="X66196">
    <property type="protein sequence ID" value="CAA46958.1"/>
    <property type="molecule type" value="mRNA"/>
</dbReference>
<dbReference type="CCDS" id="CCDS24859.1"/>
<dbReference type="PIR" id="S21155">
    <property type="entry name" value="S21155"/>
</dbReference>
<dbReference type="RefSeq" id="NP_033064.1">
    <property type="nucleotide sequence ID" value="NM_009038.2"/>
</dbReference>
<dbReference type="SMR" id="P34057"/>
<dbReference type="BioGRID" id="202840">
    <property type="interactions" value="1"/>
</dbReference>
<dbReference type="FunCoup" id="P34057">
    <property type="interactions" value="41"/>
</dbReference>
<dbReference type="STRING" id="10090.ENSMUSP00000021290"/>
<dbReference type="GlyGen" id="P34057">
    <property type="glycosylation" value="2 sites"/>
</dbReference>
<dbReference type="PhosphoSitePlus" id="P34057"/>
<dbReference type="jPOST" id="P34057"/>
<dbReference type="PaxDb" id="10090-ENSMUSP00000021290"/>
<dbReference type="ProteomicsDB" id="253194"/>
<dbReference type="Antibodypedia" id="12699">
    <property type="antibodies" value="522 antibodies from 33 providers"/>
</dbReference>
<dbReference type="Ensembl" id="ENSMUST00000021290.2">
    <property type="protein sequence ID" value="ENSMUSP00000021290.2"/>
    <property type="gene ID" value="ENSMUSG00000020907.2"/>
</dbReference>
<dbReference type="GeneID" id="19674"/>
<dbReference type="KEGG" id="mmu:19674"/>
<dbReference type="UCSC" id="uc007jmz.2">
    <property type="organism name" value="mouse"/>
</dbReference>
<dbReference type="AGR" id="MGI:97883"/>
<dbReference type="CTD" id="5957"/>
<dbReference type="MGI" id="MGI:97883">
    <property type="gene designation" value="Rcvrn"/>
</dbReference>
<dbReference type="VEuPathDB" id="HostDB:ENSMUSG00000020907"/>
<dbReference type="eggNOG" id="KOG0044">
    <property type="taxonomic scope" value="Eukaryota"/>
</dbReference>
<dbReference type="GeneTree" id="ENSGT00940000159441"/>
<dbReference type="HOGENOM" id="CLU_072366_1_0_1"/>
<dbReference type="InParanoid" id="P34057"/>
<dbReference type="OMA" id="WEFFGKK"/>
<dbReference type="OrthoDB" id="191686at2759"/>
<dbReference type="PhylomeDB" id="P34057"/>
<dbReference type="TreeFam" id="TF300009"/>
<dbReference type="Reactome" id="R-MMU-2514859">
    <property type="pathway name" value="Inactivation, recovery and regulation of the phototransduction cascade"/>
</dbReference>
<dbReference type="BioGRID-ORCS" id="19674">
    <property type="hits" value="3 hits in 76 CRISPR screens"/>
</dbReference>
<dbReference type="PRO" id="PR:P34057"/>
<dbReference type="Proteomes" id="UP000000589">
    <property type="component" value="Chromosome 11"/>
</dbReference>
<dbReference type="RNAct" id="P34057">
    <property type="molecule type" value="protein"/>
</dbReference>
<dbReference type="Bgee" id="ENSMUSG00000020907">
    <property type="expression patterns" value="Expressed in retinal neural layer and 42 other cell types or tissues"/>
</dbReference>
<dbReference type="ExpressionAtlas" id="P34057">
    <property type="expression patterns" value="baseline and differential"/>
</dbReference>
<dbReference type="GO" id="GO:0030425">
    <property type="term" value="C:dendrite"/>
    <property type="evidence" value="ECO:0007669"/>
    <property type="project" value="Ensembl"/>
</dbReference>
<dbReference type="GO" id="GO:0016020">
    <property type="term" value="C:membrane"/>
    <property type="evidence" value="ECO:0007669"/>
    <property type="project" value="UniProtKB-KW"/>
</dbReference>
<dbReference type="GO" id="GO:0043204">
    <property type="term" value="C:perikaryon"/>
    <property type="evidence" value="ECO:0007669"/>
    <property type="project" value="UniProtKB-SubCell"/>
</dbReference>
<dbReference type="GO" id="GO:0001917">
    <property type="term" value="C:photoreceptor inner segment"/>
    <property type="evidence" value="ECO:0007669"/>
    <property type="project" value="UniProtKB-SubCell"/>
</dbReference>
<dbReference type="GO" id="GO:0001750">
    <property type="term" value="C:photoreceptor outer segment"/>
    <property type="evidence" value="ECO:0007669"/>
    <property type="project" value="UniProtKB-SubCell"/>
</dbReference>
<dbReference type="GO" id="GO:0005509">
    <property type="term" value="F:calcium ion binding"/>
    <property type="evidence" value="ECO:0000315"/>
    <property type="project" value="MGI"/>
</dbReference>
<dbReference type="GO" id="GO:0007602">
    <property type="term" value="P:phototransduction"/>
    <property type="evidence" value="ECO:0000315"/>
    <property type="project" value="MGI"/>
</dbReference>
<dbReference type="GO" id="GO:0051924">
    <property type="term" value="P:regulation of calcium ion transport"/>
    <property type="evidence" value="ECO:0000315"/>
    <property type="project" value="MGI"/>
</dbReference>
<dbReference type="GO" id="GO:0007601">
    <property type="term" value="P:visual perception"/>
    <property type="evidence" value="ECO:0000315"/>
    <property type="project" value="MGI"/>
</dbReference>
<dbReference type="CDD" id="cd00051">
    <property type="entry name" value="EFh"/>
    <property type="match status" value="2"/>
</dbReference>
<dbReference type="FunFam" id="1.10.238.10:FF:000009">
    <property type="entry name" value="Visinin-like protein 1"/>
    <property type="match status" value="1"/>
</dbReference>
<dbReference type="Gene3D" id="1.10.238.10">
    <property type="entry name" value="EF-hand"/>
    <property type="match status" value="2"/>
</dbReference>
<dbReference type="InterPro" id="IPR011992">
    <property type="entry name" value="EF-hand-dom_pair"/>
</dbReference>
<dbReference type="InterPro" id="IPR018247">
    <property type="entry name" value="EF_Hand_1_Ca_BS"/>
</dbReference>
<dbReference type="InterPro" id="IPR002048">
    <property type="entry name" value="EF_hand_dom"/>
</dbReference>
<dbReference type="InterPro" id="IPR028846">
    <property type="entry name" value="Recoverin"/>
</dbReference>
<dbReference type="PANTHER" id="PTHR23055">
    <property type="entry name" value="CALCIUM BINDING PROTEINS"/>
    <property type="match status" value="1"/>
</dbReference>
<dbReference type="PANTHER" id="PTHR23055:SF20">
    <property type="entry name" value="RECOVERIN"/>
    <property type="match status" value="1"/>
</dbReference>
<dbReference type="Pfam" id="PF13202">
    <property type="entry name" value="EF-hand_5"/>
    <property type="match status" value="1"/>
</dbReference>
<dbReference type="Pfam" id="PF13499">
    <property type="entry name" value="EF-hand_7"/>
    <property type="match status" value="1"/>
</dbReference>
<dbReference type="PRINTS" id="PR00450">
    <property type="entry name" value="RECOVERIN"/>
</dbReference>
<dbReference type="SMART" id="SM00054">
    <property type="entry name" value="EFh"/>
    <property type="match status" value="2"/>
</dbReference>
<dbReference type="SUPFAM" id="SSF47473">
    <property type="entry name" value="EF-hand"/>
    <property type="match status" value="1"/>
</dbReference>
<dbReference type="PROSITE" id="PS00018">
    <property type="entry name" value="EF_HAND_1"/>
    <property type="match status" value="2"/>
</dbReference>
<dbReference type="PROSITE" id="PS50222">
    <property type="entry name" value="EF_HAND_2"/>
    <property type="match status" value="4"/>
</dbReference>
<accession>P34057</accession>
<organism>
    <name type="scientific">Mus musculus</name>
    <name type="common">Mouse</name>
    <dbReference type="NCBI Taxonomy" id="10090"/>
    <lineage>
        <taxon>Eukaryota</taxon>
        <taxon>Metazoa</taxon>
        <taxon>Chordata</taxon>
        <taxon>Craniata</taxon>
        <taxon>Vertebrata</taxon>
        <taxon>Euteleostomi</taxon>
        <taxon>Mammalia</taxon>
        <taxon>Eutheria</taxon>
        <taxon>Euarchontoglires</taxon>
        <taxon>Glires</taxon>
        <taxon>Rodentia</taxon>
        <taxon>Myomorpha</taxon>
        <taxon>Muroidea</taxon>
        <taxon>Muridae</taxon>
        <taxon>Murinae</taxon>
        <taxon>Mus</taxon>
        <taxon>Mus</taxon>
    </lineage>
</organism>
<comment type="function">
    <text evidence="2 5 7 9">Acts as a calcium sensor and regulates phototransduction of cone and rod photoreceptor cells (By similarity). Modulates light sensitivity of cone photoreceptor in dark and dim conditions (PubMed:25673692). In response to high Ca(2+) levels induced by low light levels, prolongs RHO/rhodopsin activation in rod photoreceptor cells by binding to and inhibiting GRK1-mediated phosphorylation of RHO/rhodopsin (By similarity). Plays a role in scotopic vision/enhances vision in dim light by enhancing signal transfer between rod photoreceptors and rod bipolar cells (PubMed:15882641). Improves rod photoreceptor sensitivity in dim light and mediates response of rod photoreceptors to facilitate detection of change and motion in bright light (PubMed:29435986).</text>
</comment>
<comment type="subunit">
    <text evidence="2">Homodimer; disulfide-linked (By similarity). Homodimerization is caused by prolonged intense illumination (By similarity). May form a complex composed of RHO, GRK1 and RCVRN in a Ca(2+)-dependent manner; RCVRN prevents the interaction between GRK1 and RHO (By similarity). Interacts (via C-terminus) with GRK1 (via N-terminus); the interaction is Ca(2+)-dependent (By similarity).</text>
</comment>
<comment type="subcellular location">
    <subcellularLocation>
        <location evidence="5 6 8">Photoreceptor inner segment</location>
    </subcellularLocation>
    <subcellularLocation>
        <location evidence="5 6 8">Cell projection</location>
        <location evidence="5 6 8">Cilium</location>
        <location evidence="5 6 8">Photoreceptor outer segment</location>
    </subcellularLocation>
    <subcellularLocation>
        <location evidence="2">Photoreceptor outer segment membrane</location>
        <topology evidence="2">Lipid-anchor</topology>
        <orientation evidence="2">Cytoplasmic side</orientation>
    </subcellularLocation>
    <subcellularLocation>
        <location evidence="8">Perikaryon</location>
    </subcellularLocation>
    <text evidence="2 6">Primarily expressed in the inner segments of light-adapted rod photoreceptors, approximately 10% of which translocates from photoreceptor outer segments upon light stimulation (PubMed:15961391). Targeting of myristoylated protein to rod photoreceptor outer segments is calcium dependent (By similarity).</text>
</comment>
<comment type="tissue specificity">
    <text evidence="4 5 6">Expressed in rod photoreceptors in the retina (at protein level).</text>
</comment>
<comment type="developmental stage">
    <text evidence="8">At postnatal day 11 abundantly expressed in the retina outer plexiform layer, outer nuclear layer, and outer limiting membrane, with weak expression in the inner nuclear layer and inner plexiform layer (PubMed:28151698). At postnatal day 22 abundantly expressed in the retina inner nuclear layer, outer plexiform layer, outer nuclear layer, outer limiting membrane, outer segment, and inner segment (PubMed:28151698).</text>
</comment>
<comment type="domain">
    <text evidence="2">EF-hand 2 and EF-hand 3 domains are the low-affinity and the high-affinity calcium binding sites, respectively. EF-hand 1 and EF-hand 4 domains do not bind calcium due to substitutions that disrupt their respective Ca(2+) binding loops. The cooperative binding of calcium to the EF-hand 2 domain following EF-hand 3 domain calcium binding requires myristoylation (By similarity). Calcium binding to the 2 EF-hand domains induces exposure of the myristoyl group through a protein conformation change, this process known as the calcium-myristoyl switch facilitates binding to photoreceptor cell membranes (By similarity).</text>
</comment>
<comment type="PTM">
    <text evidence="2">The N-terminal glycine is linked to one of four different types of acyl groups. The most abundant is myristoleate (14:1), but 14:0, 14:2, and 12:0 acyl residues are also present (By similarity). The Ca(2+) induced exposure of the myristoyl group, known as the calcium-myristoyl switch, promotes RCVRN binding to the photoreceptor cell membranes only when intracellular Ca(2+) concentration is high (By similarity).</text>
</comment>
<comment type="PTM">
    <text evidence="2">Oxidation on Cys-39 occurs in response to prolonged intense illumination and results in the formation of disulfide homodimers, and to a lesser extent disulfide-linked heterodimers.</text>
</comment>
<comment type="disruption phenotype">
    <text evidence="5 7 9">Knockout mice exhibit reduced scotopic vision acuity, however do not show rod photoreceptor degeneration (PubMed:15882641). Rod photoreceptors have a higher visual response threshold resulting in a 4-fold enhancement in sensitivity to low light intensity, with no change in pupil size (PubMed:15882641). Dark adapted rod photoreceptors have a reduced recovery time following stimulus, a reduced adaption time to background light and sustained photoreceptor signaling response following stimulus (PubMed:29435986). Rod photoreceptors have an increased sensitivity to stimulus in saturating background conditions (PubMed:29435986). Mice show a decrease in response, sensitivity and photoreceptor recovery to light stimulus in dark-adapted cone photoreceptors (PubMed:25673692). Rcvrn, Guca1a, and Guca1b triple knockout mice have a sustained photoreceptor signaling response following stimulus during light response in rod photoreceptors (PubMed:29435986).</text>
</comment>
<comment type="similarity">
    <text evidence="10">Belongs to the recoverin family.</text>
</comment>
<gene>
    <name type="primary">Rcvrn</name>
    <name type="synonym">Rcv1</name>
</gene>
<reference key="1">
    <citation type="journal article" date="1992" name="FEBS Lett.">
        <title>Cloning and sequencing of the 23 kDa mouse photoreceptor cell-specific protein.</title>
        <authorList>
            <person name="McGinnis J.F."/>
            <person name="Stepanik P.L."/>
            <person name="Baehr W."/>
            <person name="Subbaraya I."/>
            <person name="Lerious V."/>
        </authorList>
    </citation>
    <scope>NUCLEOTIDE SEQUENCE [MRNA]</scope>
    <scope>TISSUE SPECIFICITY</scope>
    <source>
        <tissue>Retina</tissue>
    </source>
</reference>
<reference key="2">
    <citation type="journal article" date="2005" name="J. Biol. Chem.">
        <title>Recoverin undergoes light-dependent intracellular translocation in rod photoreceptors.</title>
        <authorList>
            <person name="Strissel K.J."/>
            <person name="Lishko P.V."/>
            <person name="Trieu L.H."/>
            <person name="Kennedy M.J."/>
            <person name="Hurley J.B."/>
            <person name="Arshavsky V.Y."/>
        </authorList>
    </citation>
    <scope>SUBCELLULAR LOCATION</scope>
    <scope>TISSUE SPECIFICITY</scope>
</reference>
<reference key="3">
    <citation type="journal article" date="2005" name="Neuron">
        <title>Recoverin improves rod-mediated vision by enhancing signal transmission in the mouse retina.</title>
        <authorList>
            <person name="Sampath A.P."/>
            <person name="Strissel K.J."/>
            <person name="Elias R."/>
            <person name="Arshavsky V.Y."/>
            <person name="McGinnis J.F."/>
            <person name="Chen J."/>
            <person name="Kawamura S."/>
            <person name="Rieke F."/>
            <person name="Hurley J.B."/>
        </authorList>
    </citation>
    <scope>FUNCTION</scope>
    <scope>SUBCELLULAR LOCATION</scope>
    <scope>TISSUE SPECIFICITY</scope>
    <scope>DISRUPTION PHENOTYPE</scope>
</reference>
<reference key="4">
    <citation type="journal article" date="2015" name="J. Biol. Chem.">
        <title>Regulation of mammalian cone phototransduction by recoverin and rhodopsin kinase.</title>
        <authorList>
            <person name="Sakurai K."/>
            <person name="Chen J."/>
            <person name="Khani S.C."/>
            <person name="Kefalov V.J."/>
        </authorList>
    </citation>
    <scope>FUNCTION</scope>
    <scope>DISRUPTION PHENOTYPE</scope>
</reference>
<reference key="5">
    <citation type="journal article" date="2017" name="J. Histochem. Cytochem.">
        <title>Immunocytochemical Profiling of Cultured Mouse Primary Retinal Cells.</title>
        <authorList>
            <person name="Zalis M.C."/>
            <person name="Johansson S."/>
            <person name="Englund-Johansson U."/>
        </authorList>
    </citation>
    <scope>SUBCELLULAR LOCATION</scope>
    <scope>DEVELOPMENTAL STAGE</scope>
</reference>
<reference key="6">
    <citation type="journal article" date="2018" name="J. Physiol. (Lond.)">
        <title>Role of recoverin in rod photoreceptor light adaptation.</title>
        <authorList>
            <person name="Morshedian A."/>
            <person name="Woodruff M.L."/>
            <person name="Fain G.L."/>
        </authorList>
    </citation>
    <scope>FUNCTION</scope>
    <scope>DISRUPTION PHENOTYPE</scope>
</reference>
<evidence type="ECO:0000250" key="1"/>
<evidence type="ECO:0000250" key="2">
    <source>
        <dbReference type="UniProtKB" id="P21457"/>
    </source>
</evidence>
<evidence type="ECO:0000255" key="3">
    <source>
        <dbReference type="PROSITE-ProRule" id="PRU00448"/>
    </source>
</evidence>
<evidence type="ECO:0000269" key="4">
    <source>
    </source>
</evidence>
<evidence type="ECO:0000269" key="5">
    <source>
    </source>
</evidence>
<evidence type="ECO:0000269" key="6">
    <source>
    </source>
</evidence>
<evidence type="ECO:0000269" key="7">
    <source>
    </source>
</evidence>
<evidence type="ECO:0000269" key="8">
    <source>
    </source>
</evidence>
<evidence type="ECO:0000269" key="9">
    <source>
    </source>
</evidence>
<evidence type="ECO:0000305" key="10"/>
<name>RECO_MOUSE</name>
<keyword id="KW-0106">Calcium</keyword>
<keyword id="KW-0966">Cell projection</keyword>
<keyword id="KW-1015">Disulfide bond</keyword>
<keyword id="KW-0449">Lipoprotein</keyword>
<keyword id="KW-0472">Membrane</keyword>
<keyword id="KW-0479">Metal-binding</keyword>
<keyword id="KW-0519">Myristate</keyword>
<keyword id="KW-0558">Oxidation</keyword>
<keyword id="KW-0676">Redox-active center</keyword>
<keyword id="KW-1185">Reference proteome</keyword>
<keyword id="KW-0677">Repeat</keyword>
<keyword id="KW-0716">Sensory transduction</keyword>
<keyword id="KW-0844">Vision</keyword>
<feature type="initiator methionine" description="Removed" evidence="2">
    <location>
        <position position="1"/>
    </location>
</feature>
<feature type="chain" id="PRO_0000073760" description="Recoverin">
    <location>
        <begin position="2"/>
        <end position="202"/>
    </location>
</feature>
<feature type="domain" description="EF-hand 1" evidence="3">
    <location>
        <begin position="41"/>
        <end position="59"/>
    </location>
</feature>
<feature type="domain" description="EF-hand 2" evidence="3">
    <location>
        <begin position="61"/>
        <end position="96"/>
    </location>
</feature>
<feature type="domain" description="EF-hand 3" evidence="3">
    <location>
        <begin position="97"/>
        <end position="132"/>
    </location>
</feature>
<feature type="domain" description="EF-hand 4" evidence="3">
    <location>
        <begin position="147"/>
        <end position="182"/>
    </location>
</feature>
<feature type="region of interest" description="Interaction with GRK1" evidence="2">
    <location>
        <begin position="189"/>
        <end position="192"/>
    </location>
</feature>
<feature type="binding site" evidence="2 3">
    <location>
        <position position="74"/>
    </location>
    <ligand>
        <name>Ca(2+)</name>
        <dbReference type="ChEBI" id="CHEBI:29108"/>
        <label>1</label>
        <note>low affinity</note>
    </ligand>
</feature>
<feature type="binding site" evidence="2 3">
    <location>
        <position position="76"/>
    </location>
    <ligand>
        <name>Ca(2+)</name>
        <dbReference type="ChEBI" id="CHEBI:29108"/>
        <label>1</label>
        <note>low affinity</note>
    </ligand>
</feature>
<feature type="binding site" evidence="2 3">
    <location>
        <position position="78"/>
    </location>
    <ligand>
        <name>Ca(2+)</name>
        <dbReference type="ChEBI" id="CHEBI:29108"/>
        <label>1</label>
        <note>low affinity</note>
    </ligand>
</feature>
<feature type="binding site" evidence="2 3">
    <location>
        <position position="80"/>
    </location>
    <ligand>
        <name>Ca(2+)</name>
        <dbReference type="ChEBI" id="CHEBI:29108"/>
        <label>1</label>
        <note>low affinity</note>
    </ligand>
</feature>
<feature type="binding site" evidence="2 3">
    <location>
        <position position="85"/>
    </location>
    <ligand>
        <name>Ca(2+)</name>
        <dbReference type="ChEBI" id="CHEBI:29108"/>
        <label>1</label>
        <note>low affinity</note>
    </ligand>
</feature>
<feature type="binding site" evidence="2 3">
    <location>
        <position position="110"/>
    </location>
    <ligand>
        <name>Ca(2+)</name>
        <dbReference type="ChEBI" id="CHEBI:29108"/>
        <label>2</label>
        <note>low affinity</note>
    </ligand>
</feature>
<feature type="binding site" evidence="2 3">
    <location>
        <position position="112"/>
    </location>
    <ligand>
        <name>Ca(2+)</name>
        <dbReference type="ChEBI" id="CHEBI:29108"/>
        <label>2</label>
        <note>low affinity</note>
    </ligand>
</feature>
<feature type="binding site" evidence="2 3">
    <location>
        <position position="114"/>
    </location>
    <ligand>
        <name>Ca(2+)</name>
        <dbReference type="ChEBI" id="CHEBI:29108"/>
        <label>2</label>
        <note>low affinity</note>
    </ligand>
</feature>
<feature type="binding site" evidence="2 3">
    <location>
        <position position="116"/>
    </location>
    <ligand>
        <name>Ca(2+)</name>
        <dbReference type="ChEBI" id="CHEBI:29108"/>
        <label>2</label>
        <note>low affinity</note>
    </ligand>
</feature>
<feature type="binding site" evidence="2 3">
    <location>
        <position position="121"/>
    </location>
    <ligand>
        <name>Ca(2+)</name>
        <dbReference type="ChEBI" id="CHEBI:29108"/>
        <label>2</label>
        <note>low affinity</note>
    </ligand>
</feature>
<feature type="site" description="Interaction with GRK1" evidence="2">
    <location>
        <position position="192"/>
    </location>
</feature>
<feature type="modified residue" description="Cysteine sulfenic acid (-SOH)" evidence="2">
    <location>
        <position position="39"/>
    </location>
</feature>
<feature type="lipid moiety-binding region" description="N-myristoyl glycine" evidence="1">
    <location>
        <position position="2"/>
    </location>
</feature>
<feature type="disulfide bond" description="Interchain, redox-active" evidence="2">
    <location>
        <position position="39"/>
    </location>
</feature>
<protein>
    <recommendedName>
        <fullName>Recoverin</fullName>
    </recommendedName>
    <alternativeName>
        <fullName>23 kDa photoreceptor cell-specific protein</fullName>
    </alternativeName>
    <alternativeName>
        <fullName>Cancer-associated retinopathy protein</fullName>
        <shortName>Protein CAR</shortName>
    </alternativeName>
</protein>
<sequence length="202" mass="23407">MGNSKSGALSKEILEELQLNTKFTEEELSAWYQSFLKECPSGRITRQEFESIYSKFFPDSDPKAYAQHVFRSFDANSDGTLDFKEYVIALHMTTAGKPTQKLEWAFSLYDVDGNGTISKNEVLEIVMAIFKMIKPEDVKLLPDDENTPEKRAEKIWAFFGKKEDDKLTEEEFIEGTLANKEILRLIQFEPQKVKERIKEKKQ</sequence>
<proteinExistence type="evidence at protein level"/>